<feature type="chain" id="PRO_1000019655" description="Serine--tRNA ligase">
    <location>
        <begin position="1"/>
        <end position="426"/>
    </location>
</feature>
<feature type="binding site" evidence="1">
    <location>
        <begin position="227"/>
        <end position="229"/>
    </location>
    <ligand>
        <name>L-serine</name>
        <dbReference type="ChEBI" id="CHEBI:33384"/>
    </ligand>
</feature>
<feature type="binding site" evidence="1">
    <location>
        <begin position="258"/>
        <end position="260"/>
    </location>
    <ligand>
        <name>ATP</name>
        <dbReference type="ChEBI" id="CHEBI:30616"/>
    </ligand>
</feature>
<feature type="binding site" evidence="1">
    <location>
        <position position="274"/>
    </location>
    <ligand>
        <name>ATP</name>
        <dbReference type="ChEBI" id="CHEBI:30616"/>
    </ligand>
</feature>
<feature type="binding site" evidence="1">
    <location>
        <position position="281"/>
    </location>
    <ligand>
        <name>L-serine</name>
        <dbReference type="ChEBI" id="CHEBI:33384"/>
    </ligand>
</feature>
<feature type="binding site" evidence="1">
    <location>
        <begin position="345"/>
        <end position="348"/>
    </location>
    <ligand>
        <name>ATP</name>
        <dbReference type="ChEBI" id="CHEBI:30616"/>
    </ligand>
</feature>
<feature type="binding site" evidence="1">
    <location>
        <position position="380"/>
    </location>
    <ligand>
        <name>L-serine</name>
        <dbReference type="ChEBI" id="CHEBI:33384"/>
    </ligand>
</feature>
<evidence type="ECO:0000255" key="1">
    <source>
        <dbReference type="HAMAP-Rule" id="MF_00176"/>
    </source>
</evidence>
<keyword id="KW-0030">Aminoacyl-tRNA synthetase</keyword>
<keyword id="KW-0067">ATP-binding</keyword>
<keyword id="KW-0963">Cytoplasm</keyword>
<keyword id="KW-0436">Ligase</keyword>
<keyword id="KW-0547">Nucleotide-binding</keyword>
<keyword id="KW-0648">Protein biosynthesis</keyword>
<comment type="function">
    <text evidence="1">Catalyzes the attachment of serine to tRNA(Ser). Is also able to aminoacylate tRNA(Sec) with serine, to form the misacylated tRNA L-seryl-tRNA(Sec), which will be further converted into selenocysteinyl-tRNA(Sec).</text>
</comment>
<comment type="catalytic activity">
    <reaction evidence="1">
        <text>tRNA(Ser) + L-serine + ATP = L-seryl-tRNA(Ser) + AMP + diphosphate + H(+)</text>
        <dbReference type="Rhea" id="RHEA:12292"/>
        <dbReference type="Rhea" id="RHEA-COMP:9669"/>
        <dbReference type="Rhea" id="RHEA-COMP:9703"/>
        <dbReference type="ChEBI" id="CHEBI:15378"/>
        <dbReference type="ChEBI" id="CHEBI:30616"/>
        <dbReference type="ChEBI" id="CHEBI:33019"/>
        <dbReference type="ChEBI" id="CHEBI:33384"/>
        <dbReference type="ChEBI" id="CHEBI:78442"/>
        <dbReference type="ChEBI" id="CHEBI:78533"/>
        <dbReference type="ChEBI" id="CHEBI:456215"/>
        <dbReference type="EC" id="6.1.1.11"/>
    </reaction>
</comment>
<comment type="catalytic activity">
    <reaction evidence="1">
        <text>tRNA(Sec) + L-serine + ATP = L-seryl-tRNA(Sec) + AMP + diphosphate + H(+)</text>
        <dbReference type="Rhea" id="RHEA:42580"/>
        <dbReference type="Rhea" id="RHEA-COMP:9742"/>
        <dbReference type="Rhea" id="RHEA-COMP:10128"/>
        <dbReference type="ChEBI" id="CHEBI:15378"/>
        <dbReference type="ChEBI" id="CHEBI:30616"/>
        <dbReference type="ChEBI" id="CHEBI:33019"/>
        <dbReference type="ChEBI" id="CHEBI:33384"/>
        <dbReference type="ChEBI" id="CHEBI:78442"/>
        <dbReference type="ChEBI" id="CHEBI:78533"/>
        <dbReference type="ChEBI" id="CHEBI:456215"/>
        <dbReference type="EC" id="6.1.1.11"/>
    </reaction>
</comment>
<comment type="pathway">
    <text evidence="1">Aminoacyl-tRNA biosynthesis; selenocysteinyl-tRNA(Sec) biosynthesis; L-seryl-tRNA(Sec) from L-serine and tRNA(Sec): step 1/1.</text>
</comment>
<comment type="subunit">
    <text evidence="1">Homodimer. The tRNA molecule binds across the dimer.</text>
</comment>
<comment type="subcellular location">
    <subcellularLocation>
        <location evidence="1">Cytoplasm</location>
    </subcellularLocation>
</comment>
<comment type="domain">
    <text evidence="1">Consists of two distinct domains, a catalytic core and a N-terminal extension that is involved in tRNA binding.</text>
</comment>
<comment type="similarity">
    <text evidence="1">Belongs to the class-II aminoacyl-tRNA synthetase family. Type-1 seryl-tRNA synthetase subfamily.</text>
</comment>
<reference key="1">
    <citation type="journal article" date="2008" name="J. Bacteriol.">
        <title>The genome sequence of the tomato-pathogenic actinomycete Clavibacter michiganensis subsp. michiganensis NCPPB382 reveals a large island involved in pathogenicity.</title>
        <authorList>
            <person name="Gartemann K.-H."/>
            <person name="Abt B."/>
            <person name="Bekel T."/>
            <person name="Burger A."/>
            <person name="Engemann J."/>
            <person name="Fluegel M."/>
            <person name="Gaigalat L."/>
            <person name="Goesmann A."/>
            <person name="Graefen I."/>
            <person name="Kalinowski J."/>
            <person name="Kaup O."/>
            <person name="Kirchner O."/>
            <person name="Krause L."/>
            <person name="Linke B."/>
            <person name="McHardy A."/>
            <person name="Meyer F."/>
            <person name="Pohle S."/>
            <person name="Rueckert C."/>
            <person name="Schneiker S."/>
            <person name="Zellermann E.-M."/>
            <person name="Puehler A."/>
            <person name="Eichenlaub R."/>
            <person name="Kaiser O."/>
            <person name="Bartels D."/>
        </authorList>
    </citation>
    <scope>NUCLEOTIDE SEQUENCE [LARGE SCALE GENOMIC DNA]</scope>
    <source>
        <strain>NCPPB 382</strain>
    </source>
</reference>
<proteinExistence type="inferred from homology"/>
<dbReference type="EC" id="6.1.1.11" evidence="1"/>
<dbReference type="EMBL" id="AM711867">
    <property type="protein sequence ID" value="CAN00539.1"/>
    <property type="molecule type" value="Genomic_DNA"/>
</dbReference>
<dbReference type="RefSeq" id="WP_011931735.1">
    <property type="nucleotide sequence ID" value="NC_009480.1"/>
</dbReference>
<dbReference type="SMR" id="A5CNA2"/>
<dbReference type="GeneID" id="92949542"/>
<dbReference type="KEGG" id="cmi:CMM_0515"/>
<dbReference type="eggNOG" id="COG0172">
    <property type="taxonomic scope" value="Bacteria"/>
</dbReference>
<dbReference type="HOGENOM" id="CLU_023797_0_1_11"/>
<dbReference type="OrthoDB" id="9804647at2"/>
<dbReference type="UniPathway" id="UPA00906">
    <property type="reaction ID" value="UER00895"/>
</dbReference>
<dbReference type="Proteomes" id="UP000001564">
    <property type="component" value="Chromosome"/>
</dbReference>
<dbReference type="GO" id="GO:0005737">
    <property type="term" value="C:cytoplasm"/>
    <property type="evidence" value="ECO:0007669"/>
    <property type="project" value="UniProtKB-SubCell"/>
</dbReference>
<dbReference type="GO" id="GO:0005524">
    <property type="term" value="F:ATP binding"/>
    <property type="evidence" value="ECO:0007669"/>
    <property type="project" value="UniProtKB-UniRule"/>
</dbReference>
<dbReference type="GO" id="GO:0004828">
    <property type="term" value="F:serine-tRNA ligase activity"/>
    <property type="evidence" value="ECO:0007669"/>
    <property type="project" value="UniProtKB-UniRule"/>
</dbReference>
<dbReference type="GO" id="GO:0016260">
    <property type="term" value="P:selenocysteine biosynthetic process"/>
    <property type="evidence" value="ECO:0007669"/>
    <property type="project" value="UniProtKB-UniRule"/>
</dbReference>
<dbReference type="GO" id="GO:0006434">
    <property type="term" value="P:seryl-tRNA aminoacylation"/>
    <property type="evidence" value="ECO:0007669"/>
    <property type="project" value="UniProtKB-UniRule"/>
</dbReference>
<dbReference type="CDD" id="cd00770">
    <property type="entry name" value="SerRS_core"/>
    <property type="match status" value="1"/>
</dbReference>
<dbReference type="Gene3D" id="3.30.930.10">
    <property type="entry name" value="Bira Bifunctional Protein, Domain 2"/>
    <property type="match status" value="1"/>
</dbReference>
<dbReference type="Gene3D" id="1.10.287.40">
    <property type="entry name" value="Serine-tRNA synthetase, tRNA binding domain"/>
    <property type="match status" value="1"/>
</dbReference>
<dbReference type="HAMAP" id="MF_00176">
    <property type="entry name" value="Ser_tRNA_synth_type1"/>
    <property type="match status" value="1"/>
</dbReference>
<dbReference type="InterPro" id="IPR002314">
    <property type="entry name" value="aa-tRNA-synt_IIb"/>
</dbReference>
<dbReference type="InterPro" id="IPR006195">
    <property type="entry name" value="aa-tRNA-synth_II"/>
</dbReference>
<dbReference type="InterPro" id="IPR045864">
    <property type="entry name" value="aa-tRNA-synth_II/BPL/LPL"/>
</dbReference>
<dbReference type="InterPro" id="IPR002317">
    <property type="entry name" value="Ser-tRNA-ligase_type_1"/>
</dbReference>
<dbReference type="InterPro" id="IPR015866">
    <property type="entry name" value="Ser-tRNA-synth_1_N"/>
</dbReference>
<dbReference type="InterPro" id="IPR042103">
    <property type="entry name" value="SerRS_1_N_sf"/>
</dbReference>
<dbReference type="InterPro" id="IPR033729">
    <property type="entry name" value="SerRS_core"/>
</dbReference>
<dbReference type="InterPro" id="IPR010978">
    <property type="entry name" value="tRNA-bd_arm"/>
</dbReference>
<dbReference type="NCBIfam" id="TIGR00414">
    <property type="entry name" value="serS"/>
    <property type="match status" value="1"/>
</dbReference>
<dbReference type="PANTHER" id="PTHR11778">
    <property type="entry name" value="SERYL-TRNA SYNTHETASE"/>
    <property type="match status" value="1"/>
</dbReference>
<dbReference type="Pfam" id="PF02403">
    <property type="entry name" value="Seryl_tRNA_N"/>
    <property type="match status" value="1"/>
</dbReference>
<dbReference type="Pfam" id="PF00587">
    <property type="entry name" value="tRNA-synt_2b"/>
    <property type="match status" value="1"/>
</dbReference>
<dbReference type="PIRSF" id="PIRSF001529">
    <property type="entry name" value="Ser-tRNA-synth_IIa"/>
    <property type="match status" value="1"/>
</dbReference>
<dbReference type="PRINTS" id="PR00981">
    <property type="entry name" value="TRNASYNTHSER"/>
</dbReference>
<dbReference type="SUPFAM" id="SSF55681">
    <property type="entry name" value="Class II aaRS and biotin synthetases"/>
    <property type="match status" value="1"/>
</dbReference>
<dbReference type="SUPFAM" id="SSF46589">
    <property type="entry name" value="tRNA-binding arm"/>
    <property type="match status" value="1"/>
</dbReference>
<dbReference type="PROSITE" id="PS50862">
    <property type="entry name" value="AA_TRNA_LIGASE_II"/>
    <property type="match status" value="1"/>
</dbReference>
<gene>
    <name evidence="1" type="primary">serS</name>
    <name type="ordered locus">CMM_0515</name>
</gene>
<protein>
    <recommendedName>
        <fullName evidence="1">Serine--tRNA ligase</fullName>
        <ecNumber evidence="1">6.1.1.11</ecNumber>
    </recommendedName>
    <alternativeName>
        <fullName evidence="1">Seryl-tRNA synthetase</fullName>
        <shortName evidence="1">SerRS</shortName>
    </alternativeName>
    <alternativeName>
        <fullName evidence="1">Seryl-tRNA(Ser/Sec) synthetase</fullName>
    </alternativeName>
</protein>
<sequence>MIDPQTLRDHPDLVIASQELRGASVEVVDQAVAADSERRRAVTEFEGLRAEQNAHGKLVAKADKADKPRLIAEVQELKARVTAAQERAQEAESALDEAMRRIPNIVIDGVPAGGEDDWALVREVGAKPSFDFAPRDHLEIGEILDAIDMGRGAKVSGARFHYLKGIGARLEIALMNFGLARALEAGLVPLITPTLVKPEIMAGTGFLGAHADEVYHLDDDDLYLTGTSEVALAGYHADEILDLAQGPIRYAGWSTCYRKEAGSYGKDTRGIIRVHQFQKLEMFSYVDPADAEAEHERLLAMQERMMQDLGLSYRVIDTAAGDLGSSAARKYDVEAWIPTQDAYRELTSTSNCTTFQARRLGTRFRGEDGRTSPVATLNGTLATTRWIVAILETHQQADGSVRVPEALRPYLGGLEVLEPAAAKAAR</sequence>
<organism>
    <name type="scientific">Clavibacter michiganensis subsp. michiganensis (strain NCPPB 382)</name>
    <dbReference type="NCBI Taxonomy" id="443906"/>
    <lineage>
        <taxon>Bacteria</taxon>
        <taxon>Bacillati</taxon>
        <taxon>Actinomycetota</taxon>
        <taxon>Actinomycetes</taxon>
        <taxon>Micrococcales</taxon>
        <taxon>Microbacteriaceae</taxon>
        <taxon>Clavibacter</taxon>
    </lineage>
</organism>
<accession>A5CNA2</accession>
<name>SYS_CLAM3</name>